<evidence type="ECO:0000255" key="1">
    <source>
        <dbReference type="HAMAP-Rule" id="MF_00144"/>
    </source>
</evidence>
<keyword id="KW-0067">ATP-binding</keyword>
<keyword id="KW-0963">Cytoplasm</keyword>
<keyword id="KW-1015">Disulfide bond</keyword>
<keyword id="KW-0547">Nucleotide-binding</keyword>
<keyword id="KW-0694">RNA-binding</keyword>
<keyword id="KW-0808">Transferase</keyword>
<keyword id="KW-0819">tRNA processing</keyword>
<keyword id="KW-0820">tRNA-binding</keyword>
<proteinExistence type="inferred from homology"/>
<sequence length="356" mass="40594">MKKKVLVGMSGGVDSSVAAYLLKEQGYEVIGVTMQIWQDDEEFIEKEGGCCSLSAVADARRVANKIGIPFYVMNFKDAFKRNVIDYFVDEYMEGRTPNPCIACNKFIKFSSFLDKAMAIGIDYVATGHYAIIEKHNDRYIIKKSEDDKKDQTYALYNLTQFQLERTLMPCGQYKKSKIREIAKEIGLRVHNKKDSEEICFIPDNDHGRYIKNRFPNKVREGNFVDKQGNILGTHKGIVYYTIGQRKGLGIAFGKPMYVVDINPFRNEVVLGDLEDLLNTKLIAKDTNYIPFDTLKEPMEVEAKIRYSQTPSKAIITPIEDGRVRVNFHEKQRAITKGQSVVFYKDDLLIGGGIIEK</sequence>
<comment type="function">
    <text evidence="1">Catalyzes the 2-thiolation of uridine at the wobble position (U34) of tRNA, leading to the formation of s(2)U34.</text>
</comment>
<comment type="catalytic activity">
    <reaction evidence="1">
        <text>S-sulfanyl-L-cysteinyl-[protein] + uridine(34) in tRNA + AH2 + ATP = 2-thiouridine(34) in tRNA + L-cysteinyl-[protein] + A + AMP + diphosphate + H(+)</text>
        <dbReference type="Rhea" id="RHEA:47032"/>
        <dbReference type="Rhea" id="RHEA-COMP:10131"/>
        <dbReference type="Rhea" id="RHEA-COMP:11726"/>
        <dbReference type="Rhea" id="RHEA-COMP:11727"/>
        <dbReference type="Rhea" id="RHEA-COMP:11728"/>
        <dbReference type="ChEBI" id="CHEBI:13193"/>
        <dbReference type="ChEBI" id="CHEBI:15378"/>
        <dbReference type="ChEBI" id="CHEBI:17499"/>
        <dbReference type="ChEBI" id="CHEBI:29950"/>
        <dbReference type="ChEBI" id="CHEBI:30616"/>
        <dbReference type="ChEBI" id="CHEBI:33019"/>
        <dbReference type="ChEBI" id="CHEBI:61963"/>
        <dbReference type="ChEBI" id="CHEBI:65315"/>
        <dbReference type="ChEBI" id="CHEBI:87170"/>
        <dbReference type="ChEBI" id="CHEBI:456215"/>
        <dbReference type="EC" id="2.8.1.13"/>
    </reaction>
</comment>
<comment type="subcellular location">
    <subcellularLocation>
        <location evidence="1">Cytoplasm</location>
    </subcellularLocation>
</comment>
<comment type="similarity">
    <text evidence="1">Belongs to the MnmA/TRMU family.</text>
</comment>
<name>MNMA1_CLOB1</name>
<accession>A7FT69</accession>
<feature type="chain" id="PRO_0000349585" description="tRNA-specific 2-thiouridylase MnmA 1">
    <location>
        <begin position="1"/>
        <end position="356"/>
    </location>
</feature>
<feature type="region of interest" description="Interaction with tRNA" evidence="1">
    <location>
        <begin position="149"/>
        <end position="151"/>
    </location>
</feature>
<feature type="region of interest" description="Interaction with tRNA" evidence="1">
    <location>
        <begin position="305"/>
        <end position="306"/>
    </location>
</feature>
<feature type="active site" description="Nucleophile" evidence="1">
    <location>
        <position position="103"/>
    </location>
</feature>
<feature type="active site" description="Cysteine persulfide intermediate" evidence="1">
    <location>
        <position position="199"/>
    </location>
</feature>
<feature type="binding site" evidence="1">
    <location>
        <begin position="8"/>
        <end position="15"/>
    </location>
    <ligand>
        <name>ATP</name>
        <dbReference type="ChEBI" id="CHEBI:30616"/>
    </ligand>
</feature>
<feature type="binding site" evidence="1">
    <location>
        <position position="34"/>
    </location>
    <ligand>
        <name>ATP</name>
        <dbReference type="ChEBI" id="CHEBI:30616"/>
    </ligand>
</feature>
<feature type="binding site" evidence="1">
    <location>
        <position position="127"/>
    </location>
    <ligand>
        <name>ATP</name>
        <dbReference type="ChEBI" id="CHEBI:30616"/>
    </ligand>
</feature>
<feature type="site" description="Interaction with tRNA" evidence="1">
    <location>
        <position position="128"/>
    </location>
</feature>
<feature type="site" description="Interaction with tRNA" evidence="1">
    <location>
        <position position="338"/>
    </location>
</feature>
<feature type="disulfide bond" description="Alternate" evidence="1">
    <location>
        <begin position="103"/>
        <end position="199"/>
    </location>
</feature>
<dbReference type="EC" id="2.8.1.13" evidence="1"/>
<dbReference type="EMBL" id="CP000726">
    <property type="protein sequence ID" value="ABS32863.1"/>
    <property type="molecule type" value="Genomic_DNA"/>
</dbReference>
<dbReference type="SMR" id="A7FT69"/>
<dbReference type="KEGG" id="cba:CLB_1216"/>
<dbReference type="HOGENOM" id="CLU_035188_0_0_9"/>
<dbReference type="GO" id="GO:0005737">
    <property type="term" value="C:cytoplasm"/>
    <property type="evidence" value="ECO:0007669"/>
    <property type="project" value="UniProtKB-SubCell"/>
</dbReference>
<dbReference type="GO" id="GO:0005524">
    <property type="term" value="F:ATP binding"/>
    <property type="evidence" value="ECO:0007669"/>
    <property type="project" value="UniProtKB-KW"/>
</dbReference>
<dbReference type="GO" id="GO:0000049">
    <property type="term" value="F:tRNA binding"/>
    <property type="evidence" value="ECO:0007669"/>
    <property type="project" value="UniProtKB-KW"/>
</dbReference>
<dbReference type="GO" id="GO:0103016">
    <property type="term" value="F:tRNA-uridine 2-sulfurtransferase activity"/>
    <property type="evidence" value="ECO:0007669"/>
    <property type="project" value="UniProtKB-EC"/>
</dbReference>
<dbReference type="GO" id="GO:0002143">
    <property type="term" value="P:tRNA wobble position uridine thiolation"/>
    <property type="evidence" value="ECO:0007669"/>
    <property type="project" value="TreeGrafter"/>
</dbReference>
<dbReference type="CDD" id="cd01998">
    <property type="entry name" value="MnmA_TRMU-like"/>
    <property type="match status" value="1"/>
</dbReference>
<dbReference type="FunFam" id="2.30.30.280:FF:000001">
    <property type="entry name" value="tRNA-specific 2-thiouridylase MnmA"/>
    <property type="match status" value="1"/>
</dbReference>
<dbReference type="FunFam" id="2.40.30.10:FF:000023">
    <property type="entry name" value="tRNA-specific 2-thiouridylase MnmA"/>
    <property type="match status" value="1"/>
</dbReference>
<dbReference type="FunFam" id="3.40.50.620:FF:000115">
    <property type="entry name" value="tRNA-specific 2-thiouridylase MnmA"/>
    <property type="match status" value="1"/>
</dbReference>
<dbReference type="Gene3D" id="2.30.30.280">
    <property type="entry name" value="Adenine nucleotide alpha hydrolases-like domains"/>
    <property type="match status" value="1"/>
</dbReference>
<dbReference type="Gene3D" id="3.40.50.620">
    <property type="entry name" value="HUPs"/>
    <property type="match status" value="1"/>
</dbReference>
<dbReference type="Gene3D" id="2.40.30.10">
    <property type="entry name" value="Translation factors"/>
    <property type="match status" value="1"/>
</dbReference>
<dbReference type="HAMAP" id="MF_00144">
    <property type="entry name" value="tRNA_thiouridyl_MnmA"/>
    <property type="match status" value="1"/>
</dbReference>
<dbReference type="InterPro" id="IPR004506">
    <property type="entry name" value="MnmA-like"/>
</dbReference>
<dbReference type="InterPro" id="IPR046885">
    <property type="entry name" value="MnmA-like_C"/>
</dbReference>
<dbReference type="InterPro" id="IPR046884">
    <property type="entry name" value="MnmA-like_central"/>
</dbReference>
<dbReference type="InterPro" id="IPR023382">
    <property type="entry name" value="MnmA-like_central_sf"/>
</dbReference>
<dbReference type="InterPro" id="IPR014729">
    <property type="entry name" value="Rossmann-like_a/b/a_fold"/>
</dbReference>
<dbReference type="NCBIfam" id="NF001138">
    <property type="entry name" value="PRK00143.1"/>
    <property type="match status" value="1"/>
</dbReference>
<dbReference type="NCBIfam" id="TIGR00420">
    <property type="entry name" value="trmU"/>
    <property type="match status" value="1"/>
</dbReference>
<dbReference type="PANTHER" id="PTHR11933:SF5">
    <property type="entry name" value="MITOCHONDRIAL TRNA-SPECIFIC 2-THIOURIDYLASE 1"/>
    <property type="match status" value="1"/>
</dbReference>
<dbReference type="PANTHER" id="PTHR11933">
    <property type="entry name" value="TRNA 5-METHYLAMINOMETHYL-2-THIOURIDYLATE -METHYLTRANSFERASE"/>
    <property type="match status" value="1"/>
</dbReference>
<dbReference type="Pfam" id="PF03054">
    <property type="entry name" value="tRNA_Me_trans"/>
    <property type="match status" value="1"/>
</dbReference>
<dbReference type="Pfam" id="PF20258">
    <property type="entry name" value="tRNA_Me_trans_C"/>
    <property type="match status" value="1"/>
</dbReference>
<dbReference type="Pfam" id="PF20259">
    <property type="entry name" value="tRNA_Me_trans_M"/>
    <property type="match status" value="1"/>
</dbReference>
<dbReference type="SUPFAM" id="SSF52402">
    <property type="entry name" value="Adenine nucleotide alpha hydrolases-like"/>
    <property type="match status" value="1"/>
</dbReference>
<reference key="1">
    <citation type="journal article" date="2007" name="PLoS ONE">
        <title>Analysis of the neurotoxin complex genes in Clostridium botulinum A1-A4 and B1 strains: BoNT/A3, /Ba4 and /B1 clusters are located within plasmids.</title>
        <authorList>
            <person name="Smith T.J."/>
            <person name="Hill K.K."/>
            <person name="Foley B.T."/>
            <person name="Detter J.C."/>
            <person name="Munk A.C."/>
            <person name="Bruce D.C."/>
            <person name="Doggett N.A."/>
            <person name="Smith L.A."/>
            <person name="Marks J.D."/>
            <person name="Xie G."/>
            <person name="Brettin T.S."/>
        </authorList>
    </citation>
    <scope>NUCLEOTIDE SEQUENCE [LARGE SCALE GENOMIC DNA]</scope>
    <source>
        <strain>ATCC 19397 / Type A</strain>
    </source>
</reference>
<organism>
    <name type="scientific">Clostridium botulinum (strain ATCC 19397 / Type A)</name>
    <dbReference type="NCBI Taxonomy" id="441770"/>
    <lineage>
        <taxon>Bacteria</taxon>
        <taxon>Bacillati</taxon>
        <taxon>Bacillota</taxon>
        <taxon>Clostridia</taxon>
        <taxon>Eubacteriales</taxon>
        <taxon>Clostridiaceae</taxon>
        <taxon>Clostridium</taxon>
    </lineage>
</organism>
<gene>
    <name evidence="1" type="primary">mnmA1</name>
    <name type="ordered locus">CLB_1216</name>
</gene>
<protein>
    <recommendedName>
        <fullName evidence="1">tRNA-specific 2-thiouridylase MnmA 1</fullName>
        <ecNumber evidence="1">2.8.1.13</ecNumber>
    </recommendedName>
</protein>